<organism>
    <name type="scientific">Xylella fastidiosa (strain M12)</name>
    <dbReference type="NCBI Taxonomy" id="405440"/>
    <lineage>
        <taxon>Bacteria</taxon>
        <taxon>Pseudomonadati</taxon>
        <taxon>Pseudomonadota</taxon>
        <taxon>Gammaproteobacteria</taxon>
        <taxon>Lysobacterales</taxon>
        <taxon>Lysobacteraceae</taxon>
        <taxon>Xylella</taxon>
    </lineage>
</organism>
<dbReference type="EC" id="2.7.11.33" evidence="1"/>
<dbReference type="EC" id="2.7.4.28" evidence="1"/>
<dbReference type="EMBL" id="CP000941">
    <property type="protein sequence ID" value="ACA11598.1"/>
    <property type="molecule type" value="Genomic_DNA"/>
</dbReference>
<dbReference type="RefSeq" id="WP_004084043.1">
    <property type="nucleotide sequence ID" value="NC_010513.1"/>
</dbReference>
<dbReference type="SMR" id="B0U5U4"/>
<dbReference type="KEGG" id="xfm:Xfasm12_0594"/>
<dbReference type="HOGENOM" id="CLU_046206_1_0_6"/>
<dbReference type="GO" id="GO:0043531">
    <property type="term" value="F:ADP binding"/>
    <property type="evidence" value="ECO:0007669"/>
    <property type="project" value="UniProtKB-UniRule"/>
</dbReference>
<dbReference type="GO" id="GO:0005524">
    <property type="term" value="F:ATP binding"/>
    <property type="evidence" value="ECO:0007669"/>
    <property type="project" value="InterPro"/>
</dbReference>
<dbReference type="GO" id="GO:0016776">
    <property type="term" value="F:phosphotransferase activity, phosphate group as acceptor"/>
    <property type="evidence" value="ECO:0007669"/>
    <property type="project" value="UniProtKB-UniRule"/>
</dbReference>
<dbReference type="GO" id="GO:0004674">
    <property type="term" value="F:protein serine/threonine kinase activity"/>
    <property type="evidence" value="ECO:0007669"/>
    <property type="project" value="UniProtKB-UniRule"/>
</dbReference>
<dbReference type="HAMAP" id="MF_01062">
    <property type="entry name" value="PSRP"/>
    <property type="match status" value="1"/>
</dbReference>
<dbReference type="InterPro" id="IPR005177">
    <property type="entry name" value="Kinase-pyrophosphorylase"/>
</dbReference>
<dbReference type="InterPro" id="IPR026530">
    <property type="entry name" value="PSRP"/>
</dbReference>
<dbReference type="NCBIfam" id="NF003742">
    <property type="entry name" value="PRK05339.1"/>
    <property type="match status" value="1"/>
</dbReference>
<dbReference type="PANTHER" id="PTHR31756">
    <property type="entry name" value="PYRUVATE, PHOSPHATE DIKINASE REGULATORY PROTEIN 1, CHLOROPLASTIC"/>
    <property type="match status" value="1"/>
</dbReference>
<dbReference type="PANTHER" id="PTHR31756:SF3">
    <property type="entry name" value="PYRUVATE, PHOSPHATE DIKINASE REGULATORY PROTEIN 1, CHLOROPLASTIC"/>
    <property type="match status" value="1"/>
</dbReference>
<dbReference type="Pfam" id="PF03618">
    <property type="entry name" value="Kinase-PPPase"/>
    <property type="match status" value="1"/>
</dbReference>
<reference key="1">
    <citation type="journal article" date="2010" name="J. Bacteriol.">
        <title>Whole genome sequences of two Xylella fastidiosa strains (M12 and M23) causing almond leaf scorch disease in California.</title>
        <authorList>
            <person name="Chen J."/>
            <person name="Xie G."/>
            <person name="Han S."/>
            <person name="Chertkov O."/>
            <person name="Sims D."/>
            <person name="Civerolo E.L."/>
        </authorList>
    </citation>
    <scope>NUCLEOTIDE SEQUENCE [LARGE SCALE GENOMIC DNA]</scope>
    <source>
        <strain>M12</strain>
    </source>
</reference>
<sequence length="273" mass="30700">MSTIRPVFYVSDGTGITAETIGHSLLTQFSGFTFVTERMVFIDDAEKARDASQRILAASERYRVRPIVVNSCVNPYLSVILAESGALMLDVFAPFIGLLEHELNTSRHSRVGRAHGMVDFETYHRRINAMNFALAHDDGVAASYDEAEVVLVAVSRAGKTPTCIYLALHYGIRAANYPLIDEDLNSDQLPLRLRPYRKKLFGLTINPERLQQIRQERRPNSRYAALDTCKREVAAAERMFSAERITTLSTTHTSIEEISSKVLVTLGLQREMF</sequence>
<keyword id="KW-0418">Kinase</keyword>
<keyword id="KW-0547">Nucleotide-binding</keyword>
<keyword id="KW-0723">Serine/threonine-protein kinase</keyword>
<keyword id="KW-0808">Transferase</keyword>
<comment type="function">
    <text evidence="1">Bifunctional serine/threonine kinase and phosphorylase involved in the regulation of the phosphoenolpyruvate synthase (PEPS) by catalyzing its phosphorylation/dephosphorylation.</text>
</comment>
<comment type="catalytic activity">
    <reaction evidence="1">
        <text>[pyruvate, water dikinase] + ADP = [pyruvate, water dikinase]-phosphate + AMP + H(+)</text>
        <dbReference type="Rhea" id="RHEA:46020"/>
        <dbReference type="Rhea" id="RHEA-COMP:11425"/>
        <dbReference type="Rhea" id="RHEA-COMP:11426"/>
        <dbReference type="ChEBI" id="CHEBI:15378"/>
        <dbReference type="ChEBI" id="CHEBI:43176"/>
        <dbReference type="ChEBI" id="CHEBI:68546"/>
        <dbReference type="ChEBI" id="CHEBI:456215"/>
        <dbReference type="ChEBI" id="CHEBI:456216"/>
        <dbReference type="EC" id="2.7.11.33"/>
    </reaction>
</comment>
<comment type="catalytic activity">
    <reaction evidence="1">
        <text>[pyruvate, water dikinase]-phosphate + phosphate + H(+) = [pyruvate, water dikinase] + diphosphate</text>
        <dbReference type="Rhea" id="RHEA:48580"/>
        <dbReference type="Rhea" id="RHEA-COMP:11425"/>
        <dbReference type="Rhea" id="RHEA-COMP:11426"/>
        <dbReference type="ChEBI" id="CHEBI:15378"/>
        <dbReference type="ChEBI" id="CHEBI:33019"/>
        <dbReference type="ChEBI" id="CHEBI:43176"/>
        <dbReference type="ChEBI" id="CHEBI:43474"/>
        <dbReference type="ChEBI" id="CHEBI:68546"/>
        <dbReference type="EC" id="2.7.4.28"/>
    </reaction>
</comment>
<comment type="similarity">
    <text evidence="1">Belongs to the pyruvate, phosphate/water dikinase regulatory protein family. PSRP subfamily.</text>
</comment>
<evidence type="ECO:0000255" key="1">
    <source>
        <dbReference type="HAMAP-Rule" id="MF_01062"/>
    </source>
</evidence>
<name>PSRP_XYLFM</name>
<accession>B0U5U4</accession>
<feature type="chain" id="PRO_1000136506" description="Putative phosphoenolpyruvate synthase regulatory protein">
    <location>
        <begin position="1"/>
        <end position="273"/>
    </location>
</feature>
<feature type="binding site" evidence="1">
    <location>
        <begin position="153"/>
        <end position="160"/>
    </location>
    <ligand>
        <name>ADP</name>
        <dbReference type="ChEBI" id="CHEBI:456216"/>
    </ligand>
</feature>
<gene>
    <name type="ordered locus">Xfasm12_0594</name>
</gene>
<proteinExistence type="inferred from homology"/>
<protein>
    <recommendedName>
        <fullName evidence="1">Putative phosphoenolpyruvate synthase regulatory protein</fullName>
        <shortName evidence="1">PEP synthase regulatory protein</shortName>
        <shortName evidence="1">PSRP</shortName>
        <ecNumber evidence="1">2.7.11.33</ecNumber>
        <ecNumber evidence="1">2.7.4.28</ecNumber>
    </recommendedName>
    <alternativeName>
        <fullName evidence="1">Pyruvate, water dikinase regulatory protein</fullName>
    </alternativeName>
</protein>